<reference key="1">
    <citation type="journal article" date="2006" name="Nat. Biotechnol.">
        <title>Complete genome of the mutualistic, N2-fixing grass endophyte Azoarcus sp. strain BH72.</title>
        <authorList>
            <person name="Krause A."/>
            <person name="Ramakumar A."/>
            <person name="Bartels D."/>
            <person name="Battistoni F."/>
            <person name="Bekel T."/>
            <person name="Boch J."/>
            <person name="Boehm M."/>
            <person name="Friedrich F."/>
            <person name="Hurek T."/>
            <person name="Krause L."/>
            <person name="Linke B."/>
            <person name="McHardy A.C."/>
            <person name="Sarkar A."/>
            <person name="Schneiker S."/>
            <person name="Syed A.A."/>
            <person name="Thauer R."/>
            <person name="Vorhoelter F.-J."/>
            <person name="Weidner S."/>
            <person name="Puehler A."/>
            <person name="Reinhold-Hurek B."/>
            <person name="Kaiser O."/>
            <person name="Goesmann A."/>
        </authorList>
    </citation>
    <scope>NUCLEOTIDE SEQUENCE [LARGE SCALE GENOMIC DNA]</scope>
    <source>
        <strain>BH72</strain>
    </source>
</reference>
<gene>
    <name evidence="1" type="primary">thrS</name>
    <name type="ordered locus">azo1079</name>
</gene>
<proteinExistence type="inferred from homology"/>
<evidence type="ECO:0000255" key="1">
    <source>
        <dbReference type="HAMAP-Rule" id="MF_00184"/>
    </source>
</evidence>
<evidence type="ECO:0000255" key="2">
    <source>
        <dbReference type="PROSITE-ProRule" id="PRU01228"/>
    </source>
</evidence>
<sequence>MPNIKLPDGSVRSFDHPVTVAEVAASIGSGLAKAALAGRVDGKAVDLSYCIERDSELAILTDKSAEGVDVIRHSTAHLLAHAVKELFPEAQVTIGPVIENGFYYDFSYKRPFTPEDLEAIEKRMAELVKRELPVEREVWPRDKAVAFFKSIGEHYKAEIIASIPANEDVSLYRQGEFVDLCRGPHVPSTGRLKVFKLTKLAGAYWRGDAKNEMLQRVYGTAWAKKEDLESYLHMLEEAEKRDHRKLGRQLDLFHIQEEAPGMVFWHAKGWTLWQQVEQYLRGTISRHGYQEVRTPQIVDRSLWEKSGHWGMYSDLMFTTQSEKHDYAVKPMNCPCHIQIFNQGLKSYRDLPLRMAEFGSCHRNEPSGSLHGIMRVRNFVQDDAHIFCTDEQVQEEAAAFIALLQKVYADFGFRDIQIKLSTRPEKRVGADEQWDAAEAALAAALKAQGLEYELQPGEGAFYGPKIEFSLKDCLNRVWQCGTLQLDFNLPVRLGAEYVAEDNTKKFPVMLHRAIVGSLERFIGILIEHYAGAMPLWLAPVHAVVMNISEGQADYATEVVNRLREAGFRVEADLRNEKINYKIREHSVHKLPYQLVVGEKEKAAGVVAVRVRGGQDLGQLSLDKLIERWNGELASRSGPV</sequence>
<name>SYT_AZOSB</name>
<keyword id="KW-0030">Aminoacyl-tRNA synthetase</keyword>
<keyword id="KW-0067">ATP-binding</keyword>
<keyword id="KW-0963">Cytoplasm</keyword>
<keyword id="KW-0436">Ligase</keyword>
<keyword id="KW-0479">Metal-binding</keyword>
<keyword id="KW-0547">Nucleotide-binding</keyword>
<keyword id="KW-0648">Protein biosynthesis</keyword>
<keyword id="KW-1185">Reference proteome</keyword>
<keyword id="KW-0694">RNA-binding</keyword>
<keyword id="KW-0820">tRNA-binding</keyword>
<keyword id="KW-0862">Zinc</keyword>
<dbReference type="EC" id="6.1.1.3" evidence="1"/>
<dbReference type="EMBL" id="AM406670">
    <property type="protein sequence ID" value="CAL93696.1"/>
    <property type="molecule type" value="Genomic_DNA"/>
</dbReference>
<dbReference type="RefSeq" id="WP_011764813.1">
    <property type="nucleotide sequence ID" value="NC_008702.1"/>
</dbReference>
<dbReference type="SMR" id="A1K4E1"/>
<dbReference type="STRING" id="62928.azo1079"/>
<dbReference type="KEGG" id="aoa:dqs_1188"/>
<dbReference type="KEGG" id="azo:azo1079"/>
<dbReference type="eggNOG" id="COG0441">
    <property type="taxonomic scope" value="Bacteria"/>
</dbReference>
<dbReference type="HOGENOM" id="CLU_008554_0_1_4"/>
<dbReference type="OrthoDB" id="9802304at2"/>
<dbReference type="Proteomes" id="UP000002588">
    <property type="component" value="Chromosome"/>
</dbReference>
<dbReference type="GO" id="GO:0005737">
    <property type="term" value="C:cytoplasm"/>
    <property type="evidence" value="ECO:0007669"/>
    <property type="project" value="UniProtKB-SubCell"/>
</dbReference>
<dbReference type="GO" id="GO:0005524">
    <property type="term" value="F:ATP binding"/>
    <property type="evidence" value="ECO:0007669"/>
    <property type="project" value="UniProtKB-UniRule"/>
</dbReference>
<dbReference type="GO" id="GO:0046872">
    <property type="term" value="F:metal ion binding"/>
    <property type="evidence" value="ECO:0007669"/>
    <property type="project" value="UniProtKB-KW"/>
</dbReference>
<dbReference type="GO" id="GO:0004829">
    <property type="term" value="F:threonine-tRNA ligase activity"/>
    <property type="evidence" value="ECO:0007669"/>
    <property type="project" value="UniProtKB-UniRule"/>
</dbReference>
<dbReference type="GO" id="GO:0000049">
    <property type="term" value="F:tRNA binding"/>
    <property type="evidence" value="ECO:0007669"/>
    <property type="project" value="UniProtKB-KW"/>
</dbReference>
<dbReference type="GO" id="GO:0006435">
    <property type="term" value="P:threonyl-tRNA aminoacylation"/>
    <property type="evidence" value="ECO:0007669"/>
    <property type="project" value="UniProtKB-UniRule"/>
</dbReference>
<dbReference type="CDD" id="cd01667">
    <property type="entry name" value="TGS_ThrRS"/>
    <property type="match status" value="1"/>
</dbReference>
<dbReference type="CDD" id="cd00860">
    <property type="entry name" value="ThrRS_anticodon"/>
    <property type="match status" value="1"/>
</dbReference>
<dbReference type="CDD" id="cd00771">
    <property type="entry name" value="ThrRS_core"/>
    <property type="match status" value="1"/>
</dbReference>
<dbReference type="FunFam" id="3.10.20.30:FF:000005">
    <property type="entry name" value="Threonine--tRNA ligase"/>
    <property type="match status" value="1"/>
</dbReference>
<dbReference type="FunFam" id="3.30.54.20:FF:000002">
    <property type="entry name" value="Threonine--tRNA ligase"/>
    <property type="match status" value="1"/>
</dbReference>
<dbReference type="FunFam" id="3.30.930.10:FF:000002">
    <property type="entry name" value="Threonine--tRNA ligase"/>
    <property type="match status" value="1"/>
</dbReference>
<dbReference type="FunFam" id="3.40.50.800:FF:000001">
    <property type="entry name" value="Threonine--tRNA ligase"/>
    <property type="match status" value="1"/>
</dbReference>
<dbReference type="FunFam" id="3.30.980.10:FF:000005">
    <property type="entry name" value="Threonyl-tRNA synthetase, mitochondrial"/>
    <property type="match status" value="1"/>
</dbReference>
<dbReference type="Gene3D" id="3.10.20.30">
    <property type="match status" value="1"/>
</dbReference>
<dbReference type="Gene3D" id="3.30.54.20">
    <property type="match status" value="1"/>
</dbReference>
<dbReference type="Gene3D" id="3.40.50.800">
    <property type="entry name" value="Anticodon-binding domain"/>
    <property type="match status" value="1"/>
</dbReference>
<dbReference type="Gene3D" id="3.30.930.10">
    <property type="entry name" value="Bira Bifunctional Protein, Domain 2"/>
    <property type="match status" value="1"/>
</dbReference>
<dbReference type="Gene3D" id="3.30.980.10">
    <property type="entry name" value="Threonyl-trna Synthetase, Chain A, domain 2"/>
    <property type="match status" value="1"/>
</dbReference>
<dbReference type="HAMAP" id="MF_00184">
    <property type="entry name" value="Thr_tRNA_synth"/>
    <property type="match status" value="1"/>
</dbReference>
<dbReference type="InterPro" id="IPR002314">
    <property type="entry name" value="aa-tRNA-synt_IIb"/>
</dbReference>
<dbReference type="InterPro" id="IPR006195">
    <property type="entry name" value="aa-tRNA-synth_II"/>
</dbReference>
<dbReference type="InterPro" id="IPR045864">
    <property type="entry name" value="aa-tRNA-synth_II/BPL/LPL"/>
</dbReference>
<dbReference type="InterPro" id="IPR004154">
    <property type="entry name" value="Anticodon-bd"/>
</dbReference>
<dbReference type="InterPro" id="IPR036621">
    <property type="entry name" value="Anticodon-bd_dom_sf"/>
</dbReference>
<dbReference type="InterPro" id="IPR012675">
    <property type="entry name" value="Beta-grasp_dom_sf"/>
</dbReference>
<dbReference type="InterPro" id="IPR004095">
    <property type="entry name" value="TGS"/>
</dbReference>
<dbReference type="InterPro" id="IPR012676">
    <property type="entry name" value="TGS-like"/>
</dbReference>
<dbReference type="InterPro" id="IPR002320">
    <property type="entry name" value="Thr-tRNA-ligase_IIa"/>
</dbReference>
<dbReference type="InterPro" id="IPR018163">
    <property type="entry name" value="Thr/Ala-tRNA-synth_IIc_edit"/>
</dbReference>
<dbReference type="InterPro" id="IPR047246">
    <property type="entry name" value="ThrRS_anticodon"/>
</dbReference>
<dbReference type="InterPro" id="IPR033728">
    <property type="entry name" value="ThrRS_core"/>
</dbReference>
<dbReference type="InterPro" id="IPR012947">
    <property type="entry name" value="tRNA_SAD"/>
</dbReference>
<dbReference type="NCBIfam" id="TIGR00418">
    <property type="entry name" value="thrS"/>
    <property type="match status" value="1"/>
</dbReference>
<dbReference type="PANTHER" id="PTHR11451:SF44">
    <property type="entry name" value="THREONINE--TRNA LIGASE, CHLOROPLASTIC_MITOCHONDRIAL 2"/>
    <property type="match status" value="1"/>
</dbReference>
<dbReference type="PANTHER" id="PTHR11451">
    <property type="entry name" value="THREONINE-TRNA LIGASE"/>
    <property type="match status" value="1"/>
</dbReference>
<dbReference type="Pfam" id="PF03129">
    <property type="entry name" value="HGTP_anticodon"/>
    <property type="match status" value="1"/>
</dbReference>
<dbReference type="Pfam" id="PF02824">
    <property type="entry name" value="TGS"/>
    <property type="match status" value="1"/>
</dbReference>
<dbReference type="Pfam" id="PF00587">
    <property type="entry name" value="tRNA-synt_2b"/>
    <property type="match status" value="1"/>
</dbReference>
<dbReference type="Pfam" id="PF07973">
    <property type="entry name" value="tRNA_SAD"/>
    <property type="match status" value="1"/>
</dbReference>
<dbReference type="PRINTS" id="PR01047">
    <property type="entry name" value="TRNASYNTHTHR"/>
</dbReference>
<dbReference type="SMART" id="SM00863">
    <property type="entry name" value="tRNA_SAD"/>
    <property type="match status" value="1"/>
</dbReference>
<dbReference type="SUPFAM" id="SSF52954">
    <property type="entry name" value="Class II aaRS ABD-related"/>
    <property type="match status" value="1"/>
</dbReference>
<dbReference type="SUPFAM" id="SSF55681">
    <property type="entry name" value="Class II aaRS and biotin synthetases"/>
    <property type="match status" value="1"/>
</dbReference>
<dbReference type="SUPFAM" id="SSF81271">
    <property type="entry name" value="TGS-like"/>
    <property type="match status" value="1"/>
</dbReference>
<dbReference type="SUPFAM" id="SSF55186">
    <property type="entry name" value="ThrRS/AlaRS common domain"/>
    <property type="match status" value="1"/>
</dbReference>
<dbReference type="PROSITE" id="PS50862">
    <property type="entry name" value="AA_TRNA_LIGASE_II"/>
    <property type="match status" value="1"/>
</dbReference>
<dbReference type="PROSITE" id="PS51880">
    <property type="entry name" value="TGS"/>
    <property type="match status" value="1"/>
</dbReference>
<comment type="function">
    <text evidence="1">Catalyzes the attachment of threonine to tRNA(Thr) in a two-step reaction: L-threonine is first activated by ATP to form Thr-AMP and then transferred to the acceptor end of tRNA(Thr). Also edits incorrectly charged L-seryl-tRNA(Thr).</text>
</comment>
<comment type="catalytic activity">
    <reaction evidence="1">
        <text>tRNA(Thr) + L-threonine + ATP = L-threonyl-tRNA(Thr) + AMP + diphosphate + H(+)</text>
        <dbReference type="Rhea" id="RHEA:24624"/>
        <dbReference type="Rhea" id="RHEA-COMP:9670"/>
        <dbReference type="Rhea" id="RHEA-COMP:9704"/>
        <dbReference type="ChEBI" id="CHEBI:15378"/>
        <dbReference type="ChEBI" id="CHEBI:30616"/>
        <dbReference type="ChEBI" id="CHEBI:33019"/>
        <dbReference type="ChEBI" id="CHEBI:57926"/>
        <dbReference type="ChEBI" id="CHEBI:78442"/>
        <dbReference type="ChEBI" id="CHEBI:78534"/>
        <dbReference type="ChEBI" id="CHEBI:456215"/>
        <dbReference type="EC" id="6.1.1.3"/>
    </reaction>
</comment>
<comment type="cofactor">
    <cofactor evidence="1">
        <name>Zn(2+)</name>
        <dbReference type="ChEBI" id="CHEBI:29105"/>
    </cofactor>
    <text evidence="1">Binds 1 zinc ion per subunit.</text>
</comment>
<comment type="subunit">
    <text evidence="1">Homodimer.</text>
</comment>
<comment type="subcellular location">
    <subcellularLocation>
        <location evidence="1">Cytoplasm</location>
    </subcellularLocation>
</comment>
<comment type="similarity">
    <text evidence="1">Belongs to the class-II aminoacyl-tRNA synthetase family.</text>
</comment>
<protein>
    <recommendedName>
        <fullName evidence="1">Threonine--tRNA ligase</fullName>
        <ecNumber evidence="1">6.1.1.3</ecNumber>
    </recommendedName>
    <alternativeName>
        <fullName evidence="1">Threonyl-tRNA synthetase</fullName>
        <shortName evidence="1">ThrRS</shortName>
    </alternativeName>
</protein>
<accession>A1K4E1</accession>
<organism>
    <name type="scientific">Azoarcus sp. (strain BH72)</name>
    <dbReference type="NCBI Taxonomy" id="418699"/>
    <lineage>
        <taxon>Bacteria</taxon>
        <taxon>Pseudomonadati</taxon>
        <taxon>Pseudomonadota</taxon>
        <taxon>Betaproteobacteria</taxon>
        <taxon>Rhodocyclales</taxon>
        <taxon>Zoogloeaceae</taxon>
        <taxon>Azoarcus</taxon>
    </lineage>
</organism>
<feature type="chain" id="PRO_1000020340" description="Threonine--tRNA ligase">
    <location>
        <begin position="1"/>
        <end position="638"/>
    </location>
</feature>
<feature type="domain" description="TGS" evidence="2">
    <location>
        <begin position="1"/>
        <end position="61"/>
    </location>
</feature>
<feature type="region of interest" description="Catalytic" evidence="1">
    <location>
        <begin position="242"/>
        <end position="533"/>
    </location>
</feature>
<feature type="binding site" evidence="1">
    <location>
        <position position="333"/>
    </location>
    <ligand>
        <name>Zn(2+)</name>
        <dbReference type="ChEBI" id="CHEBI:29105"/>
    </ligand>
</feature>
<feature type="binding site" evidence="1">
    <location>
        <position position="384"/>
    </location>
    <ligand>
        <name>Zn(2+)</name>
        <dbReference type="ChEBI" id="CHEBI:29105"/>
    </ligand>
</feature>
<feature type="binding site" evidence="1">
    <location>
        <position position="510"/>
    </location>
    <ligand>
        <name>Zn(2+)</name>
        <dbReference type="ChEBI" id="CHEBI:29105"/>
    </ligand>
</feature>